<proteinExistence type="evidence at protein level"/>
<organism>
    <name type="scientific">Saccharopolyspora erythraea (strain ATCC 11635 / DSM 40517 / JCM 4748 / NBRC 13426 / NCIMB 8594 / NRRL 2338)</name>
    <dbReference type="NCBI Taxonomy" id="405948"/>
    <lineage>
        <taxon>Bacteria</taxon>
        <taxon>Bacillati</taxon>
        <taxon>Actinomycetota</taxon>
        <taxon>Actinomycetes</taxon>
        <taxon>Pseudonocardiales</taxon>
        <taxon>Pseudonocardiaceae</taxon>
        <taxon>Saccharopolyspora</taxon>
    </lineage>
</organism>
<comment type="function">
    <text>Not known, probably involved in the catabolism of octane and guaiacol. It displays a weak activity in the O-dealkylation of 7-ethoxycoumarin.</text>
</comment>
<comment type="cofactor">
    <cofactor evidence="1">
        <name>heme</name>
        <dbReference type="ChEBI" id="CHEBI:30413"/>
    </cofactor>
</comment>
<comment type="subcellular location">
    <subcellularLocation>
        <location evidence="1">Cytoplasm</location>
    </subcellularLocation>
</comment>
<comment type="similarity">
    <text evidence="2">Belongs to the cytochrome P450 family.</text>
</comment>
<name>CPXK_SACEN</name>
<sequence>MTTGEVPDLLAFDDAFAQDRHNRYARMREEPVQRIRTVNGLDAWLITRYEDVKQALLDPRIAKDFGRTQQIIEKRLADAERRPGFSPDLGPHMLNTDPPDHTRLRKLVVKAFTARRVEGLRPRIEQITDDLLDRLAGRSEVDLIDEFAFPLPITVISELMGVEDSRRDDFRSWTNVLVDGSQPEAQAQASVAMVEYLTELIAKKRTEPGDDLLTALLEAVEDGDRLSEGELIAMVFLLLVAGHETTVNLIGNCVLSLLGNPDQLAALRNDPSLLPGAIEETLRYESPVANGTFRHTAEAVRFGDVVIPEGELVWVALGAANRDGERFEDPDRFDITRETTGHVAFGHGIHFCVGAALARLEAQIAVGRLLERFPDLRMAASPDDLRWRFSVLMRGLEKLPVRPGA</sequence>
<gene>
    <name type="primary">cyp107B1</name>
    <name type="synonym">cypA</name>
    <name type="ordered locus">SACE_5814</name>
</gene>
<dbReference type="EC" id="1.14.-.-"/>
<dbReference type="EMBL" id="M83110">
    <property type="protein sequence ID" value="AAA26483.1"/>
    <property type="molecule type" value="Genomic_DNA"/>
</dbReference>
<dbReference type="EMBL" id="AM420293">
    <property type="protein sequence ID" value="CAM04998.1"/>
    <property type="molecule type" value="Genomic_DNA"/>
</dbReference>
<dbReference type="PIR" id="B42606">
    <property type="entry name" value="B42606"/>
</dbReference>
<dbReference type="RefSeq" id="WP_009943182.1">
    <property type="nucleotide sequence ID" value="NC_009142.1"/>
</dbReference>
<dbReference type="SMR" id="P33271"/>
<dbReference type="STRING" id="405948.SACE_5814"/>
<dbReference type="KEGG" id="sen:SACE_5814"/>
<dbReference type="eggNOG" id="COG2124">
    <property type="taxonomic scope" value="Bacteria"/>
</dbReference>
<dbReference type="HOGENOM" id="CLU_033716_1_0_11"/>
<dbReference type="OrthoDB" id="142769at2"/>
<dbReference type="Proteomes" id="UP000006728">
    <property type="component" value="Chromosome"/>
</dbReference>
<dbReference type="GO" id="GO:0005737">
    <property type="term" value="C:cytoplasm"/>
    <property type="evidence" value="ECO:0007669"/>
    <property type="project" value="UniProtKB-SubCell"/>
</dbReference>
<dbReference type="GO" id="GO:0020037">
    <property type="term" value="F:heme binding"/>
    <property type="evidence" value="ECO:0007669"/>
    <property type="project" value="InterPro"/>
</dbReference>
<dbReference type="GO" id="GO:0005506">
    <property type="term" value="F:iron ion binding"/>
    <property type="evidence" value="ECO:0007669"/>
    <property type="project" value="InterPro"/>
</dbReference>
<dbReference type="GO" id="GO:0004497">
    <property type="term" value="F:monooxygenase activity"/>
    <property type="evidence" value="ECO:0007669"/>
    <property type="project" value="UniProtKB-KW"/>
</dbReference>
<dbReference type="GO" id="GO:0016705">
    <property type="term" value="F:oxidoreductase activity, acting on paired donors, with incorporation or reduction of molecular oxygen"/>
    <property type="evidence" value="ECO:0007669"/>
    <property type="project" value="InterPro"/>
</dbReference>
<dbReference type="CDD" id="cd11029">
    <property type="entry name" value="CYP107-like"/>
    <property type="match status" value="1"/>
</dbReference>
<dbReference type="FunFam" id="1.10.630.10:FF:000018">
    <property type="entry name" value="Cytochrome P450 monooxygenase"/>
    <property type="match status" value="1"/>
</dbReference>
<dbReference type="Gene3D" id="1.10.630.10">
    <property type="entry name" value="Cytochrome P450"/>
    <property type="match status" value="1"/>
</dbReference>
<dbReference type="InterPro" id="IPR001128">
    <property type="entry name" value="Cyt_P450"/>
</dbReference>
<dbReference type="InterPro" id="IPR002397">
    <property type="entry name" value="Cyt_P450_B"/>
</dbReference>
<dbReference type="InterPro" id="IPR017972">
    <property type="entry name" value="Cyt_P450_CS"/>
</dbReference>
<dbReference type="InterPro" id="IPR036396">
    <property type="entry name" value="Cyt_P450_sf"/>
</dbReference>
<dbReference type="PANTHER" id="PTHR46696:SF1">
    <property type="entry name" value="CYTOCHROME P450 YJIB-RELATED"/>
    <property type="match status" value="1"/>
</dbReference>
<dbReference type="PANTHER" id="PTHR46696">
    <property type="entry name" value="P450, PUTATIVE (EUROFUNG)-RELATED"/>
    <property type="match status" value="1"/>
</dbReference>
<dbReference type="Pfam" id="PF00067">
    <property type="entry name" value="p450"/>
    <property type="match status" value="1"/>
</dbReference>
<dbReference type="PRINTS" id="PR00359">
    <property type="entry name" value="BP450"/>
</dbReference>
<dbReference type="PRINTS" id="PR00385">
    <property type="entry name" value="P450"/>
</dbReference>
<dbReference type="SUPFAM" id="SSF48264">
    <property type="entry name" value="Cytochrome P450"/>
    <property type="match status" value="1"/>
</dbReference>
<dbReference type="PROSITE" id="PS00086">
    <property type="entry name" value="CYTOCHROME_P450"/>
    <property type="match status" value="1"/>
</dbReference>
<reference key="1">
    <citation type="journal article" date="1992" name="J. Bacteriol.">
        <title>Characterization of Saccharopolyspora erythraea cytochrome P-450 genes and enzymes, including 6-deoxyerythronolide B hydroxylase.</title>
        <authorList>
            <person name="Andersen J.F."/>
            <person name="Hutchinson C.R."/>
        </authorList>
    </citation>
    <scope>NUCLEOTIDE SEQUENCE [GENOMIC DNA]</scope>
    <scope>PROTEIN SEQUENCE OF 172-203 AND 302-321</scope>
    <source>
        <strain>ATCC 11635 / DSM 40517 / JCM 4748 / NBRC 13426 / NCIMB 8594 / NRRL 2338</strain>
    </source>
</reference>
<reference key="2">
    <citation type="journal article" date="2007" name="Nat. Biotechnol.">
        <title>Complete genome sequence of the erythromycin-producing bacterium Saccharopolyspora erythraea NRRL23338.</title>
        <authorList>
            <person name="Oliynyk M."/>
            <person name="Samborskyy M."/>
            <person name="Lester J.B."/>
            <person name="Mironenko T."/>
            <person name="Scott N."/>
            <person name="Dickens S."/>
            <person name="Haydock S.F."/>
            <person name="Leadlay P.F."/>
        </authorList>
    </citation>
    <scope>NUCLEOTIDE SEQUENCE [LARGE SCALE GENOMIC DNA]</scope>
    <source>
        <strain>ATCC 11635 / DSM 40517 / JCM 4748 / NBRC 13426 / NCIMB 8594 / NRRL 2338</strain>
    </source>
</reference>
<keyword id="KW-0963">Cytoplasm</keyword>
<keyword id="KW-0903">Direct protein sequencing</keyword>
<keyword id="KW-0349">Heme</keyword>
<keyword id="KW-0408">Iron</keyword>
<keyword id="KW-0479">Metal-binding</keyword>
<keyword id="KW-0503">Monooxygenase</keyword>
<keyword id="KW-0560">Oxidoreductase</keyword>
<keyword id="KW-1185">Reference proteome</keyword>
<evidence type="ECO:0000250" key="1"/>
<evidence type="ECO:0000305" key="2"/>
<accession>P33271</accession>
<accession>A4FLS3</accession>
<protein>
    <recommendedName>
        <fullName>Cytochrome P450 107B1</fullName>
        <ecNumber>1.14.-.-</ecNumber>
    </recommendedName>
    <alternativeName>
        <fullName>Cytochrome P450CVIIB1</fullName>
    </alternativeName>
</protein>
<feature type="chain" id="PRO_0000052221" description="Cytochrome P450 107B1">
    <location>
        <begin position="1"/>
        <end position="405"/>
    </location>
</feature>
<feature type="binding site" description="axial binding residue" evidence="1">
    <location>
        <position position="352"/>
    </location>
    <ligand>
        <name>heme</name>
        <dbReference type="ChEBI" id="CHEBI:30413"/>
    </ligand>
    <ligandPart>
        <name>Fe</name>
        <dbReference type="ChEBI" id="CHEBI:18248"/>
    </ligandPart>
</feature>